<keyword id="KW-1185">Reference proteome</keyword>
<proteinExistence type="inferred from homology"/>
<evidence type="ECO:0000255" key="1">
    <source>
        <dbReference type="HAMAP-Rule" id="MF_01845"/>
    </source>
</evidence>
<reference key="1">
    <citation type="journal article" date="2009" name="Appl. Environ. Microbiol.">
        <title>Genomic analysis of 'Elusimicrobium minutum,' the first cultivated representative of the phylum 'Elusimicrobia' (formerly termite group 1).</title>
        <authorList>
            <person name="Herlemann D.P.R."/>
            <person name="Geissinger O."/>
            <person name="Ikeda-Ohtsubo W."/>
            <person name="Kunin V."/>
            <person name="Sun H."/>
            <person name="Lapidus A."/>
            <person name="Hugenholtz P."/>
            <person name="Brune A."/>
        </authorList>
    </citation>
    <scope>NUCLEOTIDE SEQUENCE [LARGE SCALE GENOMIC DNA]</scope>
    <source>
        <strain>Pei191</strain>
    </source>
</reference>
<dbReference type="EMBL" id="CP001055">
    <property type="protein sequence ID" value="ACC98366.1"/>
    <property type="molecule type" value="Genomic_DNA"/>
</dbReference>
<dbReference type="RefSeq" id="WP_012414981.1">
    <property type="nucleotide sequence ID" value="NC_010644.1"/>
</dbReference>
<dbReference type="SMR" id="B2KCX0"/>
<dbReference type="STRING" id="445932.Emin_0811"/>
<dbReference type="KEGG" id="emi:Emin_0811"/>
<dbReference type="HOGENOM" id="CLU_051840_0_0_0"/>
<dbReference type="OrthoDB" id="41906at2"/>
<dbReference type="Proteomes" id="UP000001029">
    <property type="component" value="Chromosome"/>
</dbReference>
<dbReference type="GO" id="GO:0080146">
    <property type="term" value="F:L-cysteine desulfhydrase activity"/>
    <property type="evidence" value="ECO:0007669"/>
    <property type="project" value="TreeGrafter"/>
</dbReference>
<dbReference type="GO" id="GO:0019450">
    <property type="term" value="P:L-cysteine catabolic process to pyruvate"/>
    <property type="evidence" value="ECO:0007669"/>
    <property type="project" value="TreeGrafter"/>
</dbReference>
<dbReference type="HAMAP" id="MF_01845">
    <property type="entry name" value="UPF0597"/>
    <property type="match status" value="1"/>
</dbReference>
<dbReference type="InterPro" id="IPR005130">
    <property type="entry name" value="Ser_deHydtase-like_asu"/>
</dbReference>
<dbReference type="InterPro" id="IPR021144">
    <property type="entry name" value="UPF0597"/>
</dbReference>
<dbReference type="PANTHER" id="PTHR30501">
    <property type="entry name" value="UPF0597 PROTEIN YHAM"/>
    <property type="match status" value="1"/>
</dbReference>
<dbReference type="PANTHER" id="PTHR30501:SF2">
    <property type="entry name" value="UPF0597 PROTEIN YHAM"/>
    <property type="match status" value="1"/>
</dbReference>
<dbReference type="Pfam" id="PF03313">
    <property type="entry name" value="SDH_alpha"/>
    <property type="match status" value="1"/>
</dbReference>
<dbReference type="PIRSF" id="PIRSF006054">
    <property type="entry name" value="UCP006054"/>
    <property type="match status" value="1"/>
</dbReference>
<gene>
    <name type="ordered locus">Emin_0811</name>
</gene>
<accession>B2KCX0</accession>
<name>Y811_ELUMP</name>
<protein>
    <recommendedName>
        <fullName evidence="1">UPF0597 protein Emin_0811</fullName>
    </recommendedName>
</protein>
<feature type="chain" id="PRO_1000188460" description="UPF0597 protein Emin_0811">
    <location>
        <begin position="1"/>
        <end position="423"/>
    </location>
</feature>
<organism>
    <name type="scientific">Elusimicrobium minutum (strain Pei191)</name>
    <dbReference type="NCBI Taxonomy" id="445932"/>
    <lineage>
        <taxon>Bacteria</taxon>
        <taxon>Pseudomonadati</taxon>
        <taxon>Elusimicrobiota</taxon>
        <taxon>Elusimicrobia</taxon>
        <taxon>Elusimicrobiales</taxon>
        <taxon>Elusimicrobiaceae</taxon>
        <taxon>Elusimicrobium</taxon>
    </lineage>
</organism>
<comment type="similarity">
    <text evidence="1">Belongs to the UPF0597 family.</text>
</comment>
<sequence>MNLLKEVLKNQVYPAMGCTEPVSVALCAAYAAKELGKPVQKAVFYLDAGTFKNGLAVRIPNTSGERGNLLAGTAGLLIAKPQLKMEILKAATPSILKRAKQLIDDKKAFIKVAPCKKHFYIKVEVENGKDKASCVISDSHTTVSKLTKNGKVIFENKPSKKKEDNYKQLLGKATLKDLIALADNADNTDLKYIKKGVEMNLNACKEGKKLKKVGFFLESTVEKSILQKNLVTETKIMAARVADARMDGIAVPVMSSGESGNQGVVAILVPYNVGKKSKVKEEKILKSIAFSHLLNGYVKVYTGSLSPLCGCAIAAGVGAAGAIVYQQNGDLKKITLAINNIISDIGGMLCDGAKSGCALKVVSSVDSAIRAAYMGLNNYGITELEGFIGKTAEETIQNLGNISITGMCDVDAVIVDIMKKKVK</sequence>